<protein>
    <recommendedName>
        <fullName>Isoliquiritigenin 2'-O-methyltransferase</fullName>
        <shortName>MsCHMT</shortName>
        <ecNumber evidence="3 5">2.1.1.154</ecNumber>
    </recommendedName>
    <alternativeName>
        <fullName>Chalcone O-methyltransferase</fullName>
        <shortName>ChOMT</shortName>
    </alternativeName>
    <alternativeName>
        <fullName>Licodione 2'-O-methyltransferase</fullName>
        <shortName>MsLMT</shortName>
        <ecNumber evidence="5">2.1.1.65</ecNumber>
    </alternativeName>
</protein>
<proteinExistence type="evidence at protein level"/>
<sequence>MGNSYITKEDNQISATSEQTEDSACLSAMVLTTNLVYPAVLNAAIDLNLFEIIAKATPPGAFMSPSEIASKLPASTQHSDLPNRLDRMLRLLASYSVLTSTTRTIEDGGAERVYGLSMVGKYLVPDESRGYLASFTTFLCYPALLQVWMNFKEAVVDEDIDLFKNVHGVTKYEFMGKDKKMNQIFNKSMVDVCATEMKRMLEIYTGFEGISTLVDVGGGSGRNLELIISKYPLIKGINFDLPQVIENAPPLSGIEHVGGDMFASVPQGDAMILKAVCHNWSDEKCIEFLSNCHKALSPNGKVIIVEFILPEEPNTSEESKLVSTLDNLMFITVGGRERTEKQYEKLSKLSGFSKFQVACRAFNSLGVMEFYK</sequence>
<name>CHOMT_MEDSA</name>
<organism>
    <name type="scientific">Medicago sativa</name>
    <name type="common">Alfalfa</name>
    <dbReference type="NCBI Taxonomy" id="3879"/>
    <lineage>
        <taxon>Eukaryota</taxon>
        <taxon>Viridiplantae</taxon>
        <taxon>Streptophyta</taxon>
        <taxon>Embryophyta</taxon>
        <taxon>Tracheophyta</taxon>
        <taxon>Spermatophyta</taxon>
        <taxon>Magnoliopsida</taxon>
        <taxon>eudicotyledons</taxon>
        <taxon>Gunneridae</taxon>
        <taxon>Pentapetalae</taxon>
        <taxon>rosids</taxon>
        <taxon>fabids</taxon>
        <taxon>Fabales</taxon>
        <taxon>Fabaceae</taxon>
        <taxon>Papilionoideae</taxon>
        <taxon>50 kb inversion clade</taxon>
        <taxon>NPAAA clade</taxon>
        <taxon>Hologalegina</taxon>
        <taxon>IRL clade</taxon>
        <taxon>Trifolieae</taxon>
        <taxon>Medicago</taxon>
    </lineage>
</organism>
<keyword id="KW-0002">3D-structure</keyword>
<keyword id="KW-0903">Direct protein sequencing</keyword>
<keyword id="KW-0489">Methyltransferase</keyword>
<keyword id="KW-0949">S-adenosyl-L-methionine</keyword>
<keyword id="KW-0808">Transferase</keyword>
<evidence type="ECO:0000255" key="1">
    <source>
        <dbReference type="PROSITE-ProRule" id="PRU01020"/>
    </source>
</evidence>
<evidence type="ECO:0000269" key="2">
    <source>
    </source>
</evidence>
<evidence type="ECO:0000269" key="3">
    <source>
    </source>
</evidence>
<evidence type="ECO:0000269" key="4">
    <source>
    </source>
</evidence>
<evidence type="ECO:0000269" key="5">
    <source>
    </source>
</evidence>
<evidence type="ECO:0007829" key="6">
    <source>
        <dbReference type="PDB" id="1FP1"/>
    </source>
</evidence>
<dbReference type="EC" id="2.1.1.154" evidence="3 5"/>
<dbReference type="EC" id="2.1.1.65" evidence="5"/>
<dbReference type="EMBL" id="L10211">
    <property type="protein sequence ID" value="AAB48059.1"/>
    <property type="molecule type" value="mRNA"/>
</dbReference>
<dbReference type="PIR" id="T09617">
    <property type="entry name" value="T09617"/>
</dbReference>
<dbReference type="PDB" id="1FP1">
    <property type="method" value="X-ray"/>
    <property type="resolution" value="1.82 A"/>
    <property type="chains" value="D=1-372"/>
</dbReference>
<dbReference type="PDB" id="1FPQ">
    <property type="method" value="X-ray"/>
    <property type="resolution" value="2.00 A"/>
    <property type="chains" value="A=1-372"/>
</dbReference>
<dbReference type="PDBsum" id="1FP1"/>
<dbReference type="PDBsum" id="1FPQ"/>
<dbReference type="SMR" id="P93324"/>
<dbReference type="KEGG" id="ag:AAB48059"/>
<dbReference type="BRENDA" id="2.1.1.154">
    <property type="organism ID" value="3078"/>
</dbReference>
<dbReference type="SABIO-RK" id="P93324"/>
<dbReference type="EvolutionaryTrace" id="P93324"/>
<dbReference type="GO" id="GO:0033802">
    <property type="term" value="F:isoliquiritigenin 2'-O-methyltransferase activity"/>
    <property type="evidence" value="ECO:0000314"/>
    <property type="project" value="UniProtKB"/>
</dbReference>
<dbReference type="GO" id="GO:0030751">
    <property type="term" value="F:licodione 2'-O-methyltransferase activity"/>
    <property type="evidence" value="ECO:0000314"/>
    <property type="project" value="UniProtKB"/>
</dbReference>
<dbReference type="GO" id="GO:0046983">
    <property type="term" value="F:protein dimerization activity"/>
    <property type="evidence" value="ECO:0007669"/>
    <property type="project" value="InterPro"/>
</dbReference>
<dbReference type="GO" id="GO:0032259">
    <property type="term" value="P:methylation"/>
    <property type="evidence" value="ECO:0007669"/>
    <property type="project" value="UniProtKB-KW"/>
</dbReference>
<dbReference type="CDD" id="cd02440">
    <property type="entry name" value="AdoMet_MTases"/>
    <property type="match status" value="1"/>
</dbReference>
<dbReference type="FunFam" id="1.10.10.10:FF:000357">
    <property type="entry name" value="Caffeic acid 3-O-methyltransferase"/>
    <property type="match status" value="1"/>
</dbReference>
<dbReference type="FunFam" id="3.40.50.150:FF:000596">
    <property type="entry name" value="Caffeic acid O-methyltransferase"/>
    <property type="match status" value="1"/>
</dbReference>
<dbReference type="Gene3D" id="3.40.50.150">
    <property type="entry name" value="Vaccinia Virus protein VP39"/>
    <property type="match status" value="1"/>
</dbReference>
<dbReference type="Gene3D" id="1.10.10.10">
    <property type="entry name" value="Winged helix-like DNA-binding domain superfamily/Winged helix DNA-binding domain"/>
    <property type="match status" value="1"/>
</dbReference>
<dbReference type="InterPro" id="IPR016461">
    <property type="entry name" value="COMT-like"/>
</dbReference>
<dbReference type="InterPro" id="IPR001077">
    <property type="entry name" value="O_MeTrfase_dom"/>
</dbReference>
<dbReference type="InterPro" id="IPR012967">
    <property type="entry name" value="Plant_O-MeTrfase_dimerisation"/>
</dbReference>
<dbReference type="InterPro" id="IPR029063">
    <property type="entry name" value="SAM-dependent_MTases_sf"/>
</dbReference>
<dbReference type="InterPro" id="IPR036388">
    <property type="entry name" value="WH-like_DNA-bd_sf"/>
</dbReference>
<dbReference type="InterPro" id="IPR036390">
    <property type="entry name" value="WH_DNA-bd_sf"/>
</dbReference>
<dbReference type="PANTHER" id="PTHR11746">
    <property type="entry name" value="O-METHYLTRANSFERASE"/>
    <property type="match status" value="1"/>
</dbReference>
<dbReference type="Pfam" id="PF08100">
    <property type="entry name" value="Dimerisation"/>
    <property type="match status" value="1"/>
</dbReference>
<dbReference type="Pfam" id="PF00891">
    <property type="entry name" value="Methyltransf_2"/>
    <property type="match status" value="1"/>
</dbReference>
<dbReference type="PIRSF" id="PIRSF005739">
    <property type="entry name" value="O-mtase"/>
    <property type="match status" value="1"/>
</dbReference>
<dbReference type="SUPFAM" id="SSF53335">
    <property type="entry name" value="S-adenosyl-L-methionine-dependent methyltransferases"/>
    <property type="match status" value="1"/>
</dbReference>
<dbReference type="SUPFAM" id="SSF46785">
    <property type="entry name" value="Winged helix' DNA-binding domain"/>
    <property type="match status" value="1"/>
</dbReference>
<dbReference type="PROSITE" id="PS51683">
    <property type="entry name" value="SAM_OMT_II"/>
    <property type="match status" value="1"/>
</dbReference>
<reference key="1">
    <citation type="journal article" date="1993" name="Plant J.">
        <title>Molecular characterization and expression of alfalfa isoliquiritigenin 2'-O-methyltransferase, an enzyme specifically involved in the biosynthesis of an inducer of Rhizobium meliloti nodulation genes.</title>
        <authorList>
            <person name="Maxwell C.A."/>
            <person name="Harrison M.J."/>
            <person name="Dixon R.A."/>
        </authorList>
    </citation>
    <scope>NUCLEOTIDE SEQUENCE [MRNA]</scope>
    <scope>PROTEIN SEQUENCE OF 2-31</scope>
    <scope>TISSUE SPECIFICITY</scope>
    <scope>DEVELOPMENTAL STAGE</scope>
    <scope>INDUCTION</scope>
    <source>
        <strain>cv. Apollo</strain>
    </source>
</reference>
<reference key="2">
    <citation type="journal article" date="1992" name="Arch. Biochem. Biophys.">
        <title>Identification, purification, and characterization of S-adenosyl-L-methionine: isoliquiritigenin 2'-O-methyltransferase from alfalfa (Medicago sativa L.).</title>
        <authorList>
            <person name="Maxwell C.A."/>
            <person name="Edwards R."/>
            <person name="Dixon R.A."/>
        </authorList>
    </citation>
    <scope>FUNCTION</scope>
    <scope>CATALYTIC ACTIVITY</scope>
    <scope>ACTIVITY REGULATION</scope>
    <scope>BIOPHYSICOCHEMICAL PROPERTIES</scope>
    <scope>SUBUNIT</scope>
    <scope>TISSUE SPECIFICITY</scope>
    <source>
        <strain>cv. Apollo</strain>
    </source>
</reference>
<reference key="3">
    <citation type="journal article" date="1997" name="Phytochemistry">
        <title>Enzymic O-methylation of isoliquiritigenin and licodione in alfalfa and licorice cultures.</title>
        <authorList>
            <person name="Ichimura M."/>
            <person name="Furuno T."/>
            <person name="Takahashi T."/>
            <person name="Dixon R.A."/>
            <person name="Ayabe S."/>
        </authorList>
    </citation>
    <scope>FUNCTION</scope>
    <scope>CATALYTIC ACTIVITY</scope>
    <scope>TISSUE SPECIFICITY</scope>
    <source>
        <strain>cv. Moapa</strain>
    </source>
</reference>
<reference key="4">
    <citation type="journal article" date="2001" name="Nat. Struct. Biol.">
        <title>Structures of two natural product methyltransferases reveal the basis for substrate specificity in plant O-methyltransferases.</title>
        <authorList>
            <person name="Zubieta C."/>
            <person name="He X.-Z."/>
            <person name="Dixon R.A."/>
            <person name="Noel J.P."/>
        </authorList>
    </citation>
    <scope>X-RAY CRYSTALLOGRAPHY (1.82 ANGSTROMS) IN COMPLEX WITH SUBSTRATES</scope>
    <scope>SUBUNIT</scope>
    <scope>SUBSTRATE-BINDING</scope>
    <scope>ACTIVE SITE</scope>
    <source>
        <strain>cv. Apollo</strain>
    </source>
</reference>
<feature type="initiator methionine" description="Removed" evidence="4">
    <location>
        <position position="1"/>
    </location>
</feature>
<feature type="chain" id="PRO_0000204439" description="Isoliquiritigenin 2'-O-methyltransferase">
    <location>
        <begin position="2"/>
        <end position="372"/>
    </location>
</feature>
<feature type="active site" description="Proton acceptor" evidence="1 2">
    <location>
        <position position="278"/>
    </location>
</feature>
<feature type="binding site">
    <location>
        <position position="217"/>
    </location>
    <ligand>
        <name>S-adenosyl-L-methionine</name>
        <dbReference type="ChEBI" id="CHEBI:59789"/>
    </ligand>
</feature>
<feature type="binding site">
    <location>
        <position position="240"/>
    </location>
    <ligand>
        <name>S-adenosyl-L-methionine</name>
        <dbReference type="ChEBI" id="CHEBI:59789"/>
    </ligand>
</feature>
<feature type="binding site">
    <location>
        <position position="260"/>
    </location>
    <ligand>
        <name>S-adenosyl-L-methionine</name>
        <dbReference type="ChEBI" id="CHEBI:59789"/>
    </ligand>
</feature>
<feature type="binding site">
    <location>
        <position position="261"/>
    </location>
    <ligand>
        <name>S-adenosyl-L-methionine</name>
        <dbReference type="ChEBI" id="CHEBI:59789"/>
    </ligand>
</feature>
<feature type="binding site">
    <location>
        <position position="274"/>
    </location>
    <ligand>
        <name>S-adenosyl-L-methionine</name>
        <dbReference type="ChEBI" id="CHEBI:59789"/>
    </ligand>
</feature>
<feature type="helix" evidence="6">
    <location>
        <begin position="21"/>
        <end position="33"/>
    </location>
</feature>
<feature type="helix" evidence="6">
    <location>
        <begin position="36"/>
        <end position="46"/>
    </location>
</feature>
<feature type="helix" evidence="6">
    <location>
        <begin position="49"/>
        <end position="54"/>
    </location>
</feature>
<feature type="helix" evidence="6">
    <location>
        <begin position="65"/>
        <end position="69"/>
    </location>
</feature>
<feature type="helix" evidence="6">
    <location>
        <begin position="74"/>
        <end position="76"/>
    </location>
</feature>
<feature type="helix" evidence="6">
    <location>
        <begin position="81"/>
        <end position="94"/>
    </location>
</feature>
<feature type="strand" evidence="6">
    <location>
        <begin position="97"/>
        <end position="104"/>
    </location>
</feature>
<feature type="strand" evidence="6">
    <location>
        <begin position="110"/>
        <end position="116"/>
    </location>
</feature>
<feature type="helix" evidence="6">
    <location>
        <begin position="120"/>
        <end position="123"/>
    </location>
</feature>
<feature type="helix" evidence="6">
    <location>
        <begin position="134"/>
        <end position="139"/>
    </location>
</feature>
<feature type="helix" evidence="6">
    <location>
        <begin position="142"/>
        <end position="148"/>
    </location>
</feature>
<feature type="helix" evidence="6">
    <location>
        <begin position="151"/>
        <end position="156"/>
    </location>
</feature>
<feature type="helix" evidence="6">
    <location>
        <begin position="179"/>
        <end position="203"/>
    </location>
</feature>
<feature type="turn" evidence="6">
    <location>
        <begin position="206"/>
        <end position="209"/>
    </location>
</feature>
<feature type="strand" evidence="6">
    <location>
        <begin position="211"/>
        <end position="216"/>
    </location>
</feature>
<feature type="helix" evidence="6">
    <location>
        <begin position="222"/>
        <end position="230"/>
    </location>
</feature>
<feature type="strand" evidence="6">
    <location>
        <begin position="235"/>
        <end position="240"/>
    </location>
</feature>
<feature type="helix" evidence="6">
    <location>
        <begin position="242"/>
        <end position="245"/>
    </location>
</feature>
<feature type="strand" evidence="6">
    <location>
        <begin position="254"/>
        <end position="258"/>
    </location>
</feature>
<feature type="turn" evidence="6">
    <location>
        <begin position="261"/>
        <end position="263"/>
    </location>
</feature>
<feature type="strand" evidence="6">
    <location>
        <begin position="268"/>
        <end position="276"/>
    </location>
</feature>
<feature type="helix" evidence="6">
    <location>
        <begin position="277"/>
        <end position="279"/>
    </location>
</feature>
<feature type="helix" evidence="6">
    <location>
        <begin position="282"/>
        <end position="295"/>
    </location>
</feature>
<feature type="strand" evidence="6">
    <location>
        <begin position="296"/>
        <end position="309"/>
    </location>
</feature>
<feature type="helix" evidence="6">
    <location>
        <begin position="317"/>
        <end position="333"/>
    </location>
</feature>
<feature type="helix" evidence="6">
    <location>
        <begin position="340"/>
        <end position="349"/>
    </location>
</feature>
<feature type="strand" evidence="6">
    <location>
        <begin position="353"/>
        <end position="361"/>
    </location>
</feature>
<feature type="turn" evidence="6">
    <location>
        <begin position="362"/>
        <end position="364"/>
    </location>
</feature>
<feature type="strand" evidence="6">
    <location>
        <begin position="365"/>
        <end position="371"/>
    </location>
</feature>
<comment type="function">
    <text evidence="3 5">Methylates the 2'-hydroxyl of isoliquiritigenin and licodione. Does not methylate narigenin chalcone, caffeic acid or daidzein. Involved in the root nodulation initiation by promoting the biosynthesis of nod-inducing molecules.</text>
</comment>
<comment type="catalytic activity">
    <reaction evidence="3 5">
        <text>isoliquiritigenin + S-adenosyl-L-methionine = 2'-O-methylisoliquiritigenin + S-adenosyl-L-homocysteine + H(+)</text>
        <dbReference type="Rhea" id="RHEA:21608"/>
        <dbReference type="ChEBI" id="CHEBI:15378"/>
        <dbReference type="ChEBI" id="CHEBI:57856"/>
        <dbReference type="ChEBI" id="CHEBI:59789"/>
        <dbReference type="ChEBI" id="CHEBI:310312"/>
        <dbReference type="ChEBI" id="CHEBI:519567"/>
        <dbReference type="EC" id="2.1.1.154"/>
    </reaction>
</comment>
<comment type="catalytic activity">
    <reaction evidence="5">
        <text>licodione + S-adenosyl-L-methionine = 2'-O-methyllicodione + S-adenosyl-L-homocysteine + H(+)</text>
        <dbReference type="Rhea" id="RHEA:18521"/>
        <dbReference type="ChEBI" id="CHEBI:15378"/>
        <dbReference type="ChEBI" id="CHEBI:57856"/>
        <dbReference type="ChEBI" id="CHEBI:59789"/>
        <dbReference type="ChEBI" id="CHEBI:77642"/>
        <dbReference type="ChEBI" id="CHEBI:77711"/>
        <dbReference type="EC" id="2.1.1.65"/>
    </reaction>
</comment>
<comment type="activity regulation">
    <text evidence="3">Inhibited by 1 mM Co(2+), Cu(2+), Zn(2+) or Fe(2+). Non-competitively inhibited by S-adenosyl-L-homocysteine. Competitively inhibited by 2'-O-methylisoliquiritigenin.</text>
</comment>
<comment type="biophysicochemical properties">
    <kinetics>
        <KM evidence="3">2.2 uM for isoliquiritigenin</KM>
        <KM evidence="3">17.7 uM for S-adenosyl-L-methionine</KM>
    </kinetics>
    <phDependence>
        <text evidence="3">Optimum pH is 9.0.</text>
    </phDependence>
</comment>
<comment type="subunit">
    <text evidence="2 3">Monomer (PubMed:1731632). Homodimer (PubMed:11224575).</text>
</comment>
<comment type="tissue specificity">
    <text evidence="3 4 5">Roots (at protein level). Expressed mainly in roots, and to a lesser extent in root nodules. In the roots, expression is not detected in the root tip or the cells immediately behind the tip, but is detected in tissues starting 1.5-2.0 mm distal to the root tip. Detected in the epidermal and cortical cells of 2 day old roots, with lower levels in vascular tissue.</text>
</comment>
<comment type="developmental stage">
    <text evidence="4">Levels are highest one week after planting.</text>
</comment>
<comment type="induction">
    <text evidence="4">By fungal elicitor.</text>
</comment>
<comment type="similarity">
    <text evidence="1">Belongs to the class I-like SAM-binding methyltransferase superfamily. Cation-independent O-methyltransferase family. COMT subfamily.</text>
</comment>
<accession>P93324</accession>